<dbReference type="EC" id="3.6.4.-" evidence="1"/>
<dbReference type="EMBL" id="BX571857">
    <property type="protein sequence ID" value="CAG42235.1"/>
    <property type="molecule type" value="Genomic_DNA"/>
</dbReference>
<dbReference type="RefSeq" id="WP_000154236.1">
    <property type="nucleotide sequence ID" value="NC_002953.3"/>
</dbReference>
<dbReference type="SMR" id="Q6GBY5"/>
<dbReference type="KEGG" id="sas:SAS0460"/>
<dbReference type="HOGENOM" id="CLU_005122_1_3_9"/>
<dbReference type="GO" id="GO:0005737">
    <property type="term" value="C:cytoplasm"/>
    <property type="evidence" value="ECO:0007669"/>
    <property type="project" value="UniProtKB-SubCell"/>
</dbReference>
<dbReference type="GO" id="GO:0005524">
    <property type="term" value="F:ATP binding"/>
    <property type="evidence" value="ECO:0007669"/>
    <property type="project" value="UniProtKB-UniRule"/>
</dbReference>
<dbReference type="GO" id="GO:0003684">
    <property type="term" value="F:damaged DNA binding"/>
    <property type="evidence" value="ECO:0007669"/>
    <property type="project" value="InterPro"/>
</dbReference>
<dbReference type="GO" id="GO:0003678">
    <property type="term" value="F:DNA helicase activity"/>
    <property type="evidence" value="ECO:0007669"/>
    <property type="project" value="TreeGrafter"/>
</dbReference>
<dbReference type="GO" id="GO:0016787">
    <property type="term" value="F:hydrolase activity"/>
    <property type="evidence" value="ECO:0007669"/>
    <property type="project" value="UniProtKB-KW"/>
</dbReference>
<dbReference type="GO" id="GO:0006355">
    <property type="term" value="P:regulation of DNA-templated transcription"/>
    <property type="evidence" value="ECO:0007669"/>
    <property type="project" value="UniProtKB-UniRule"/>
</dbReference>
<dbReference type="GO" id="GO:0000716">
    <property type="term" value="P:transcription-coupled nucleotide-excision repair, DNA damage recognition"/>
    <property type="evidence" value="ECO:0007669"/>
    <property type="project" value="UniProtKB-UniRule"/>
</dbReference>
<dbReference type="CDD" id="cd17991">
    <property type="entry name" value="DEXHc_TRCF"/>
    <property type="match status" value="1"/>
</dbReference>
<dbReference type="FunFam" id="3.40.50.300:FF:000546">
    <property type="entry name" value="Transcription-repair-coupling factor"/>
    <property type="match status" value="1"/>
</dbReference>
<dbReference type="Gene3D" id="2.40.10.170">
    <property type="match status" value="1"/>
</dbReference>
<dbReference type="Gene3D" id="3.40.50.11140">
    <property type="match status" value="1"/>
</dbReference>
<dbReference type="Gene3D" id="3.40.50.11180">
    <property type="match status" value="1"/>
</dbReference>
<dbReference type="Gene3D" id="3.40.50.300">
    <property type="entry name" value="P-loop containing nucleotide triphosphate hydrolases"/>
    <property type="match status" value="2"/>
</dbReference>
<dbReference type="Gene3D" id="3.30.2060.10">
    <property type="entry name" value="Penicillin-binding protein 1b domain"/>
    <property type="match status" value="1"/>
</dbReference>
<dbReference type="Gene3D" id="3.90.1150.50">
    <property type="entry name" value="Transcription-repair-coupling factor, D7 domain"/>
    <property type="match status" value="1"/>
</dbReference>
<dbReference type="HAMAP" id="MF_00969">
    <property type="entry name" value="TRCF"/>
    <property type="match status" value="1"/>
</dbReference>
<dbReference type="InterPro" id="IPR003711">
    <property type="entry name" value="CarD-like/TRCF_RID"/>
</dbReference>
<dbReference type="InterPro" id="IPR036101">
    <property type="entry name" value="CarD-like/TRCF_RID_sf"/>
</dbReference>
<dbReference type="InterPro" id="IPR011545">
    <property type="entry name" value="DEAD/DEAH_box_helicase_dom"/>
</dbReference>
<dbReference type="InterPro" id="IPR014001">
    <property type="entry name" value="Helicase_ATP-bd"/>
</dbReference>
<dbReference type="InterPro" id="IPR001650">
    <property type="entry name" value="Helicase_C-like"/>
</dbReference>
<dbReference type="InterPro" id="IPR004576">
    <property type="entry name" value="Mfd"/>
</dbReference>
<dbReference type="InterPro" id="IPR048635">
    <property type="entry name" value="MFD_D3"/>
</dbReference>
<dbReference type="InterPro" id="IPR027417">
    <property type="entry name" value="P-loop_NTPase"/>
</dbReference>
<dbReference type="InterPro" id="IPR047112">
    <property type="entry name" value="RecG/Mfd"/>
</dbReference>
<dbReference type="InterPro" id="IPR037235">
    <property type="entry name" value="TRCF-like_C_D7"/>
</dbReference>
<dbReference type="InterPro" id="IPR005118">
    <property type="entry name" value="TRCF_C"/>
</dbReference>
<dbReference type="InterPro" id="IPR041471">
    <property type="entry name" value="UvrB_inter"/>
</dbReference>
<dbReference type="NCBIfam" id="TIGR00580">
    <property type="entry name" value="mfd"/>
    <property type="match status" value="1"/>
</dbReference>
<dbReference type="PANTHER" id="PTHR47964">
    <property type="entry name" value="ATP-DEPENDENT DNA HELICASE HOMOLOG RECG, CHLOROPLASTIC"/>
    <property type="match status" value="1"/>
</dbReference>
<dbReference type="PANTHER" id="PTHR47964:SF1">
    <property type="entry name" value="ATP-DEPENDENT DNA HELICASE HOMOLOG RECG, CHLOROPLASTIC"/>
    <property type="match status" value="1"/>
</dbReference>
<dbReference type="Pfam" id="PF02559">
    <property type="entry name" value="CarD_TRCF_RID"/>
    <property type="match status" value="1"/>
</dbReference>
<dbReference type="Pfam" id="PF00270">
    <property type="entry name" value="DEAD"/>
    <property type="match status" value="1"/>
</dbReference>
<dbReference type="Pfam" id="PF00271">
    <property type="entry name" value="Helicase_C"/>
    <property type="match status" value="1"/>
</dbReference>
<dbReference type="Pfam" id="PF21132">
    <property type="entry name" value="MFD_D3"/>
    <property type="match status" value="1"/>
</dbReference>
<dbReference type="Pfam" id="PF03461">
    <property type="entry name" value="TRCF"/>
    <property type="match status" value="1"/>
</dbReference>
<dbReference type="Pfam" id="PF17757">
    <property type="entry name" value="UvrB_inter"/>
    <property type="match status" value="1"/>
</dbReference>
<dbReference type="SMART" id="SM01058">
    <property type="entry name" value="CarD_TRCF"/>
    <property type="match status" value="1"/>
</dbReference>
<dbReference type="SMART" id="SM00487">
    <property type="entry name" value="DEXDc"/>
    <property type="match status" value="1"/>
</dbReference>
<dbReference type="SMART" id="SM00490">
    <property type="entry name" value="HELICc"/>
    <property type="match status" value="1"/>
</dbReference>
<dbReference type="SMART" id="SM00982">
    <property type="entry name" value="TRCF"/>
    <property type="match status" value="1"/>
</dbReference>
<dbReference type="SUPFAM" id="SSF141259">
    <property type="entry name" value="CarD-like"/>
    <property type="match status" value="1"/>
</dbReference>
<dbReference type="SUPFAM" id="SSF52540">
    <property type="entry name" value="P-loop containing nucleoside triphosphate hydrolases"/>
    <property type="match status" value="4"/>
</dbReference>
<dbReference type="SUPFAM" id="SSF143517">
    <property type="entry name" value="TRCF domain-like"/>
    <property type="match status" value="1"/>
</dbReference>
<dbReference type="PROSITE" id="PS51192">
    <property type="entry name" value="HELICASE_ATP_BIND_1"/>
    <property type="match status" value="1"/>
</dbReference>
<dbReference type="PROSITE" id="PS51194">
    <property type="entry name" value="HELICASE_CTER"/>
    <property type="match status" value="1"/>
</dbReference>
<comment type="function">
    <text evidence="1">Couples transcription and DNA repair by recognizing RNA polymerase (RNAP) stalled at DNA lesions. Mediates ATP-dependent release of RNAP and its truncated transcript from the DNA, and recruitment of nucleotide excision repair machinery to the damaged site.</text>
</comment>
<comment type="subcellular location">
    <subcellularLocation>
        <location evidence="1">Cytoplasm</location>
    </subcellularLocation>
</comment>
<comment type="similarity">
    <text evidence="1">In the N-terminal section; belongs to the UvrB family.</text>
</comment>
<comment type="similarity">
    <text evidence="1">In the C-terminal section; belongs to the helicase family. RecG subfamily.</text>
</comment>
<proteinExistence type="inferred from homology"/>
<protein>
    <recommendedName>
        <fullName evidence="1">Transcription-repair-coupling factor</fullName>
        <shortName evidence="1">TRCF</shortName>
        <ecNumber evidence="1">3.6.4.-</ecNumber>
    </recommendedName>
</protein>
<keyword id="KW-0067">ATP-binding</keyword>
<keyword id="KW-0963">Cytoplasm</keyword>
<keyword id="KW-0227">DNA damage</keyword>
<keyword id="KW-0234">DNA repair</keyword>
<keyword id="KW-0238">DNA-binding</keyword>
<keyword id="KW-0347">Helicase</keyword>
<keyword id="KW-0378">Hydrolase</keyword>
<keyword id="KW-0547">Nucleotide-binding</keyword>
<organism>
    <name type="scientific">Staphylococcus aureus (strain MSSA476)</name>
    <dbReference type="NCBI Taxonomy" id="282459"/>
    <lineage>
        <taxon>Bacteria</taxon>
        <taxon>Bacillati</taxon>
        <taxon>Bacillota</taxon>
        <taxon>Bacilli</taxon>
        <taxon>Bacillales</taxon>
        <taxon>Staphylococcaceae</taxon>
        <taxon>Staphylococcus</taxon>
    </lineage>
</organism>
<gene>
    <name evidence="1" type="primary">mfd</name>
    <name type="ordered locus">SAS0460</name>
</gene>
<evidence type="ECO:0000255" key="1">
    <source>
        <dbReference type="HAMAP-Rule" id="MF_00969"/>
    </source>
</evidence>
<name>MFD_STAAS</name>
<accession>Q6GBY5</accession>
<feature type="chain" id="PRO_0000282670" description="Transcription-repair-coupling factor">
    <location>
        <begin position="1"/>
        <end position="1168"/>
    </location>
</feature>
<feature type="domain" description="Helicase ATP-binding" evidence="1">
    <location>
        <begin position="633"/>
        <end position="794"/>
    </location>
</feature>
<feature type="domain" description="Helicase C-terminal" evidence="1">
    <location>
        <begin position="808"/>
        <end position="969"/>
    </location>
</feature>
<feature type="short sequence motif" description="DEEQ box">
    <location>
        <begin position="747"/>
        <end position="750"/>
    </location>
</feature>
<feature type="binding site" evidence="1">
    <location>
        <begin position="646"/>
        <end position="653"/>
    </location>
    <ligand>
        <name>ATP</name>
        <dbReference type="ChEBI" id="CHEBI:30616"/>
    </ligand>
</feature>
<sequence length="1168" mass="134218">MTILTTLIKEDNHFQDLNQVFGQANTLVTGLSPSAKVTMIAEKYAQSNQQLLLITNNLYQADKLETDLLQFIDAEELYKYPVQDIMTEEFSTQSPQLMSERIRTLTALAQGKKGLFIVPLNGLKKWLTPVEMWQNHQMTLRVGEDIDVDQFLNKLVNMGYKRESVVSHIGEFSLRGGIIDIFPLIGEPIRIELFDTKIDSIRDFDVETQRSKDNVEEVDITTASDYIITEEVISHLKEELKTAYENTRPKIDKSVRNDLKETYESFKLFESTYFDHQILRRLVAFMYETPSTIIEYFQKDAIIAVDEFNRIKETEESLTVESDSFISNIIESGNGFIGQSFIKYDDFETLIEGYPVTYFSLFATTMPIKLNHIIKFSCKPVQQFYGQYDIMRSEFQRYVNQNYHIVVLVETETKVERMQAMLSEMHIPSITKLHRSMSSGQAVIIEGSLSEGFELPDMGLVVITERELFKSKQKKQRKRTKAISNAEKIKSYQDLNVGDYIVHVHHGVGRYLGVETLEVGQTHRDYIKLQYKGTDQLFVPVDQMDQVQKYVASEDKTPKLNKLGGSEWKKTKAKVQQSVEDIAEELIDLYKEREMAEGYQYGEDTAEQTTFELDFPYELTPDQAKSIDEIKDDMQKSRPMDRLLCGDVGYGKTEVAVRAAFKAVMEGKQVAFLVPTTILAQQHYETLIERMQDFPVEIQLMSRFRTPKEIKQTKEGLKTGFVDIVVGTHKLLSKDIQYKDLGLLIVDEEQRFGVRHKERIKTLKHNVDVLTLTATPIPRTLHMSMLGVRDLSVIETPPENRFPVQTYVLEQNMSFIKEALERELSRDGQVFYLYNKVQSIYEKREQLQMLMPDANIAVAHGQMTERDLEETMLSFINNEYDILVTTTIIETGVDVPNANTLIIEDADRFGLSQLYQLRGRVGRSSRIGYAYFLHPANKVLTETAEDRLQAIKEFTELGSGFKIAMRDLNIRGAGNLLGKQQHGFIDTVGFDLYSQMLEEAVNEKRGIKEPESEVPEVEVDLNLDAYLPTEYIANEQAKIEIYKKLRKTETFDQIIDIKDELIDRFNDYPVEVARLLDIVEIKVHALHSGITLIKDKGKIIDIHLSVKATENIDGEVLFKATQPLGRTMKVGVQNNAMTITLTKQNQWLDSLKFLVKCIEESMRISDEA</sequence>
<reference key="1">
    <citation type="journal article" date="2004" name="Proc. Natl. Acad. Sci. U.S.A.">
        <title>Complete genomes of two clinical Staphylococcus aureus strains: evidence for the rapid evolution of virulence and drug resistance.</title>
        <authorList>
            <person name="Holden M.T.G."/>
            <person name="Feil E.J."/>
            <person name="Lindsay J.A."/>
            <person name="Peacock S.J."/>
            <person name="Day N.P.J."/>
            <person name="Enright M.C."/>
            <person name="Foster T.J."/>
            <person name="Moore C.E."/>
            <person name="Hurst L."/>
            <person name="Atkin R."/>
            <person name="Barron A."/>
            <person name="Bason N."/>
            <person name="Bentley S.D."/>
            <person name="Chillingworth C."/>
            <person name="Chillingworth T."/>
            <person name="Churcher C."/>
            <person name="Clark L."/>
            <person name="Corton C."/>
            <person name="Cronin A."/>
            <person name="Doggett J."/>
            <person name="Dowd L."/>
            <person name="Feltwell T."/>
            <person name="Hance Z."/>
            <person name="Harris B."/>
            <person name="Hauser H."/>
            <person name="Holroyd S."/>
            <person name="Jagels K."/>
            <person name="James K.D."/>
            <person name="Lennard N."/>
            <person name="Line A."/>
            <person name="Mayes R."/>
            <person name="Moule S."/>
            <person name="Mungall K."/>
            <person name="Ormond D."/>
            <person name="Quail M.A."/>
            <person name="Rabbinowitsch E."/>
            <person name="Rutherford K.M."/>
            <person name="Sanders M."/>
            <person name="Sharp S."/>
            <person name="Simmonds M."/>
            <person name="Stevens K."/>
            <person name="Whitehead S."/>
            <person name="Barrell B.G."/>
            <person name="Spratt B.G."/>
            <person name="Parkhill J."/>
        </authorList>
    </citation>
    <scope>NUCLEOTIDE SEQUENCE [LARGE SCALE GENOMIC DNA]</scope>
    <source>
        <strain>MSSA476</strain>
    </source>
</reference>